<dbReference type="EMBL" id="CP001393">
    <property type="protein sequence ID" value="ACM60071.1"/>
    <property type="molecule type" value="Genomic_DNA"/>
</dbReference>
<dbReference type="RefSeq" id="WP_013290832.1">
    <property type="nucleotide sequence ID" value="NC_012034.1"/>
</dbReference>
<dbReference type="SMR" id="B9MQW7"/>
<dbReference type="STRING" id="521460.Athe_0968"/>
<dbReference type="GeneID" id="31772320"/>
<dbReference type="KEGG" id="ate:Athe_0968"/>
<dbReference type="eggNOG" id="COG0228">
    <property type="taxonomic scope" value="Bacteria"/>
</dbReference>
<dbReference type="HOGENOM" id="CLU_100590_5_0_9"/>
<dbReference type="Proteomes" id="UP000007723">
    <property type="component" value="Chromosome"/>
</dbReference>
<dbReference type="GO" id="GO:0005737">
    <property type="term" value="C:cytoplasm"/>
    <property type="evidence" value="ECO:0007669"/>
    <property type="project" value="UniProtKB-ARBA"/>
</dbReference>
<dbReference type="GO" id="GO:0015935">
    <property type="term" value="C:small ribosomal subunit"/>
    <property type="evidence" value="ECO:0007669"/>
    <property type="project" value="TreeGrafter"/>
</dbReference>
<dbReference type="GO" id="GO:0003735">
    <property type="term" value="F:structural constituent of ribosome"/>
    <property type="evidence" value="ECO:0007669"/>
    <property type="project" value="InterPro"/>
</dbReference>
<dbReference type="GO" id="GO:0006412">
    <property type="term" value="P:translation"/>
    <property type="evidence" value="ECO:0007669"/>
    <property type="project" value="UniProtKB-UniRule"/>
</dbReference>
<dbReference type="FunFam" id="3.30.1320.10:FF:000005">
    <property type="entry name" value="30S ribosomal protein S16"/>
    <property type="match status" value="1"/>
</dbReference>
<dbReference type="Gene3D" id="3.30.1320.10">
    <property type="match status" value="1"/>
</dbReference>
<dbReference type="HAMAP" id="MF_00385">
    <property type="entry name" value="Ribosomal_bS16"/>
    <property type="match status" value="1"/>
</dbReference>
<dbReference type="InterPro" id="IPR000307">
    <property type="entry name" value="Ribosomal_bS16"/>
</dbReference>
<dbReference type="InterPro" id="IPR020592">
    <property type="entry name" value="Ribosomal_bS16_CS"/>
</dbReference>
<dbReference type="InterPro" id="IPR023803">
    <property type="entry name" value="Ribosomal_bS16_dom_sf"/>
</dbReference>
<dbReference type="NCBIfam" id="TIGR00002">
    <property type="entry name" value="S16"/>
    <property type="match status" value="1"/>
</dbReference>
<dbReference type="PANTHER" id="PTHR12919">
    <property type="entry name" value="30S RIBOSOMAL PROTEIN S16"/>
    <property type="match status" value="1"/>
</dbReference>
<dbReference type="PANTHER" id="PTHR12919:SF20">
    <property type="entry name" value="SMALL RIBOSOMAL SUBUNIT PROTEIN BS16M"/>
    <property type="match status" value="1"/>
</dbReference>
<dbReference type="Pfam" id="PF00886">
    <property type="entry name" value="Ribosomal_S16"/>
    <property type="match status" value="1"/>
</dbReference>
<dbReference type="SUPFAM" id="SSF54565">
    <property type="entry name" value="Ribosomal protein S16"/>
    <property type="match status" value="1"/>
</dbReference>
<dbReference type="PROSITE" id="PS00732">
    <property type="entry name" value="RIBOSOMAL_S16"/>
    <property type="match status" value="1"/>
</dbReference>
<name>RS16_CALBD</name>
<feature type="chain" id="PRO_1000196321" description="Small ribosomal subunit protein bS16">
    <location>
        <begin position="1"/>
        <end position="81"/>
    </location>
</feature>
<evidence type="ECO:0000255" key="1">
    <source>
        <dbReference type="HAMAP-Rule" id="MF_00385"/>
    </source>
</evidence>
<evidence type="ECO:0000305" key="2"/>
<reference key="1">
    <citation type="submission" date="2009-01" db="EMBL/GenBank/DDBJ databases">
        <title>Complete sequence of chromosome of Caldicellulosiruptor becscii DSM 6725.</title>
        <authorList>
            <person name="Lucas S."/>
            <person name="Copeland A."/>
            <person name="Lapidus A."/>
            <person name="Glavina del Rio T."/>
            <person name="Tice H."/>
            <person name="Bruce D."/>
            <person name="Goodwin L."/>
            <person name="Pitluck S."/>
            <person name="Sims D."/>
            <person name="Meincke L."/>
            <person name="Brettin T."/>
            <person name="Detter J.C."/>
            <person name="Han C."/>
            <person name="Larimer F."/>
            <person name="Land M."/>
            <person name="Hauser L."/>
            <person name="Kyrpides N."/>
            <person name="Ovchinnikova G."/>
            <person name="Kataeva I."/>
            <person name="Adams M.W.W."/>
        </authorList>
    </citation>
    <scope>NUCLEOTIDE SEQUENCE [LARGE SCALE GENOMIC DNA]</scope>
    <source>
        <strain>ATCC BAA-1888 / DSM 6725 / KCTC 15123 / Z-1320</strain>
    </source>
</reference>
<proteinExistence type="inferred from homology"/>
<protein>
    <recommendedName>
        <fullName evidence="1">Small ribosomal subunit protein bS16</fullName>
    </recommendedName>
    <alternativeName>
        <fullName evidence="2">30S ribosomal protein S16</fullName>
    </alternativeName>
</protein>
<gene>
    <name evidence="1" type="primary">rpsP</name>
    <name type="ordered locus">Athe_0968</name>
</gene>
<accession>B9MQW7</accession>
<sequence>MAVRIRLKRMGAKNNPFYRIVVADSRTPRDGKTIDEIGYYNPLKNPADIKVDVEKAKKWLSYGAQPTDTVKILLKKAGVIE</sequence>
<keyword id="KW-0687">Ribonucleoprotein</keyword>
<keyword id="KW-0689">Ribosomal protein</keyword>
<organism>
    <name type="scientific">Caldicellulosiruptor bescii (strain ATCC BAA-1888 / DSM 6725 / KCTC 15123 / Z-1320)</name>
    <name type="common">Anaerocellum thermophilum</name>
    <dbReference type="NCBI Taxonomy" id="521460"/>
    <lineage>
        <taxon>Bacteria</taxon>
        <taxon>Bacillati</taxon>
        <taxon>Bacillota</taxon>
        <taxon>Bacillota incertae sedis</taxon>
        <taxon>Caldicellulosiruptorales</taxon>
        <taxon>Caldicellulosiruptoraceae</taxon>
        <taxon>Caldicellulosiruptor</taxon>
    </lineage>
</organism>
<comment type="similarity">
    <text evidence="1">Belongs to the bacterial ribosomal protein bS16 family.</text>
</comment>